<dbReference type="EC" id="7.1.1.9"/>
<dbReference type="EMBL" id="L19095">
    <property type="protein sequence ID" value="AAA53644.2"/>
    <property type="molecule type" value="Genomic_DNA"/>
</dbReference>
<dbReference type="SMR" id="P67794"/>
<dbReference type="UniPathway" id="UPA00705"/>
<dbReference type="GO" id="GO:0005743">
    <property type="term" value="C:mitochondrial inner membrane"/>
    <property type="evidence" value="ECO:0007669"/>
    <property type="project" value="UniProtKB-SubCell"/>
</dbReference>
<dbReference type="GO" id="GO:0045277">
    <property type="term" value="C:respiratory chain complex IV"/>
    <property type="evidence" value="ECO:0007669"/>
    <property type="project" value="InterPro"/>
</dbReference>
<dbReference type="GO" id="GO:0004129">
    <property type="term" value="F:cytochrome-c oxidase activity"/>
    <property type="evidence" value="ECO:0007669"/>
    <property type="project" value="UniProtKB-EC"/>
</dbReference>
<dbReference type="GO" id="GO:0020037">
    <property type="term" value="F:heme binding"/>
    <property type="evidence" value="ECO:0007669"/>
    <property type="project" value="InterPro"/>
</dbReference>
<dbReference type="GO" id="GO:0046872">
    <property type="term" value="F:metal ion binding"/>
    <property type="evidence" value="ECO:0007669"/>
    <property type="project" value="UniProtKB-KW"/>
</dbReference>
<dbReference type="GO" id="GO:0015990">
    <property type="term" value="P:electron transport coupled proton transport"/>
    <property type="evidence" value="ECO:0007669"/>
    <property type="project" value="TreeGrafter"/>
</dbReference>
<dbReference type="GO" id="GO:0006123">
    <property type="term" value="P:mitochondrial electron transport, cytochrome c to oxygen"/>
    <property type="evidence" value="ECO:0007669"/>
    <property type="project" value="TreeGrafter"/>
</dbReference>
<dbReference type="CDD" id="cd01663">
    <property type="entry name" value="Cyt_c_Oxidase_I"/>
    <property type="match status" value="1"/>
</dbReference>
<dbReference type="FunFam" id="1.20.210.10:FF:000001">
    <property type="entry name" value="Cytochrome c oxidase subunit 1"/>
    <property type="match status" value="1"/>
</dbReference>
<dbReference type="Gene3D" id="1.20.210.10">
    <property type="entry name" value="Cytochrome c oxidase-like, subunit I domain"/>
    <property type="match status" value="1"/>
</dbReference>
<dbReference type="InterPro" id="IPR023616">
    <property type="entry name" value="Cyt_c_oxase-like_su1_dom"/>
</dbReference>
<dbReference type="InterPro" id="IPR036927">
    <property type="entry name" value="Cyt_c_oxase-like_su1_sf"/>
</dbReference>
<dbReference type="InterPro" id="IPR000883">
    <property type="entry name" value="Cyt_C_Oxase_1"/>
</dbReference>
<dbReference type="InterPro" id="IPR023615">
    <property type="entry name" value="Cyt_c_Oxase_su1_BS"/>
</dbReference>
<dbReference type="InterPro" id="IPR033944">
    <property type="entry name" value="Cyt_c_oxase_su1_dom"/>
</dbReference>
<dbReference type="PANTHER" id="PTHR10422">
    <property type="entry name" value="CYTOCHROME C OXIDASE SUBUNIT 1"/>
    <property type="match status" value="1"/>
</dbReference>
<dbReference type="PANTHER" id="PTHR10422:SF18">
    <property type="entry name" value="CYTOCHROME C OXIDASE SUBUNIT 1"/>
    <property type="match status" value="1"/>
</dbReference>
<dbReference type="Pfam" id="PF00115">
    <property type="entry name" value="COX1"/>
    <property type="match status" value="1"/>
</dbReference>
<dbReference type="PRINTS" id="PR01165">
    <property type="entry name" value="CYCOXIDASEI"/>
</dbReference>
<dbReference type="SUPFAM" id="SSF81442">
    <property type="entry name" value="Cytochrome c oxidase subunit I-like"/>
    <property type="match status" value="1"/>
</dbReference>
<dbReference type="PROSITE" id="PS50855">
    <property type="entry name" value="COX1"/>
    <property type="match status" value="1"/>
</dbReference>
<dbReference type="PROSITE" id="PS00077">
    <property type="entry name" value="COX1_CUB"/>
    <property type="match status" value="1"/>
</dbReference>
<geneLocation type="mitochondrion"/>
<protein>
    <recommendedName>
        <fullName>Cytochrome c oxidase subunit 1</fullName>
        <ecNumber>7.1.1.9</ecNumber>
    </recommendedName>
    <alternativeName>
        <fullName>Cytochrome c oxidase polypeptide I</fullName>
    </alternativeName>
</protein>
<name>COX1_CHOPI</name>
<evidence type="ECO:0000250" key="1">
    <source>
        <dbReference type="UniProtKB" id="P00396"/>
    </source>
</evidence>
<evidence type="ECO:0000250" key="2">
    <source>
        <dbReference type="UniProtKB" id="P00401"/>
    </source>
</evidence>
<evidence type="ECO:0000255" key="3"/>
<evidence type="ECO:0000305" key="4"/>
<feature type="chain" id="PRO_0000183311" description="Cytochrome c oxidase subunit 1">
    <location>
        <begin position="1"/>
        <end position="513"/>
    </location>
</feature>
<feature type="transmembrane region" description="Helical" evidence="3">
    <location>
        <begin position="16"/>
        <end position="36"/>
    </location>
</feature>
<feature type="transmembrane region" description="Helical" evidence="3">
    <location>
        <begin position="62"/>
        <end position="82"/>
    </location>
</feature>
<feature type="transmembrane region" description="Helical" evidence="3">
    <location>
        <begin position="101"/>
        <end position="121"/>
    </location>
</feature>
<feature type="transmembrane region" description="Helical" evidence="3">
    <location>
        <begin position="144"/>
        <end position="164"/>
    </location>
</feature>
<feature type="transmembrane region" description="Helical" evidence="3">
    <location>
        <begin position="182"/>
        <end position="202"/>
    </location>
</feature>
<feature type="transmembrane region" description="Helical" evidence="3">
    <location>
        <begin position="233"/>
        <end position="253"/>
    </location>
</feature>
<feature type="transmembrane region" description="Helical" evidence="3">
    <location>
        <begin position="267"/>
        <end position="287"/>
    </location>
</feature>
<feature type="transmembrane region" description="Helical" evidence="3">
    <location>
        <begin position="304"/>
        <end position="324"/>
    </location>
</feature>
<feature type="transmembrane region" description="Helical" evidence="3">
    <location>
        <begin position="337"/>
        <end position="357"/>
    </location>
</feature>
<feature type="transmembrane region" description="Helical" evidence="3">
    <location>
        <begin position="384"/>
        <end position="404"/>
    </location>
</feature>
<feature type="transmembrane region" description="Helical" evidence="3">
    <location>
        <begin position="413"/>
        <end position="433"/>
    </location>
</feature>
<feature type="transmembrane region" description="Helical" evidence="3">
    <location>
        <begin position="451"/>
        <end position="471"/>
    </location>
</feature>
<feature type="binding site" evidence="2">
    <location>
        <position position="39"/>
    </location>
    <ligand>
        <name>Ca(2+)</name>
        <dbReference type="ChEBI" id="CHEBI:29108"/>
    </ligand>
</feature>
<feature type="binding site" evidence="2">
    <location>
        <position position="44"/>
    </location>
    <ligand>
        <name>Ca(2+)</name>
        <dbReference type="ChEBI" id="CHEBI:29108"/>
    </ligand>
</feature>
<feature type="binding site" description="axial binding residue" evidence="2">
    <location>
        <position position="60"/>
    </location>
    <ligand>
        <name>Fe(II)-heme a</name>
        <dbReference type="ChEBI" id="CHEBI:61715"/>
        <note>low-spin</note>
    </ligand>
    <ligandPart>
        <name>Fe</name>
        <dbReference type="ChEBI" id="CHEBI:18248"/>
    </ligandPart>
</feature>
<feature type="binding site" evidence="2">
    <location>
        <position position="239"/>
    </location>
    <ligand>
        <name>Cu cation</name>
        <dbReference type="ChEBI" id="CHEBI:23378"/>
        <label>B</label>
    </ligand>
</feature>
<feature type="binding site" evidence="1">
    <location>
        <position position="243"/>
    </location>
    <ligand>
        <name>O2</name>
        <dbReference type="ChEBI" id="CHEBI:15379"/>
    </ligand>
</feature>
<feature type="binding site" evidence="2">
    <location>
        <position position="289"/>
    </location>
    <ligand>
        <name>Cu cation</name>
        <dbReference type="ChEBI" id="CHEBI:23378"/>
        <label>B</label>
    </ligand>
</feature>
<feature type="binding site" evidence="2">
    <location>
        <position position="290"/>
    </location>
    <ligand>
        <name>Cu cation</name>
        <dbReference type="ChEBI" id="CHEBI:23378"/>
        <label>B</label>
    </ligand>
</feature>
<feature type="binding site" evidence="2">
    <location>
        <position position="367"/>
    </location>
    <ligand>
        <name>Mg(2+)</name>
        <dbReference type="ChEBI" id="CHEBI:18420"/>
        <note>ligand shared with subunit 2</note>
    </ligand>
</feature>
<feature type="binding site" evidence="2">
    <location>
        <position position="368"/>
    </location>
    <ligand>
        <name>Mg(2+)</name>
        <dbReference type="ChEBI" id="CHEBI:18420"/>
        <note>ligand shared with subunit 2</note>
    </ligand>
</feature>
<feature type="binding site" description="axial binding residue" evidence="2">
    <location>
        <position position="375"/>
    </location>
    <ligand>
        <name>heme a3</name>
        <dbReference type="ChEBI" id="CHEBI:83282"/>
        <note>high-spin</note>
    </ligand>
    <ligandPart>
        <name>Fe</name>
        <dbReference type="ChEBI" id="CHEBI:18248"/>
    </ligandPart>
</feature>
<feature type="binding site" description="axial binding residue" evidence="2">
    <location>
        <position position="377"/>
    </location>
    <ligand>
        <name>Fe(II)-heme a</name>
        <dbReference type="ChEBI" id="CHEBI:61715"/>
        <note>low-spin</note>
    </ligand>
    <ligandPart>
        <name>Fe</name>
        <dbReference type="ChEBI" id="CHEBI:18248"/>
    </ligandPart>
</feature>
<feature type="cross-link" description="1'-histidyl-3'-tyrosine (His-Tyr)" evidence="2">
    <location>
        <begin position="239"/>
        <end position="243"/>
    </location>
</feature>
<sequence>MMRKWLYSTNHKDIGTLYFMFGIWAGMVGTSLSLLIRAELGNPGSLIGDDQIYNTIVTAHAFIMIFFMVMPIMIGGFGNWLVPLMLGAPDMAFPRMNNMSFWLLPPSIMLLISSSIVENGAGTGWTVYPPLSSNIAHSGSSVDLAIFSLHLAGISSILGAVNFITTIINMRPNNMSLDQMPLFVWSVGITALLLLLSLPVLAGAITMLLTDRNLNTSFFDPAGGGDPILYQHLFWFFGHPEVYILILPGFGMISHIISQESGKKETFGCLGMIYAMMAIGLLGFVVWAHHMFTVGMDIDTRAYFTSATMIIAVPTGIKIFSWLATLHGTQINYSPSMLWSLGFVFLFTVGGLTGVILANSSIDVTLHDTYYVVAHFHYVLSMGAVFAIMGGFVHWYPLFTGLALNPYLLKIQFFTMFIGVNLTFFPQHFLGLAGMPRRYSDYPDTYTSWNIISSLGSYISLIATMLMLMIIWESLINKRIILFPLNMNSSIEWYQNLPPAEHSYNELPILSNF</sequence>
<gene>
    <name type="primary">COI</name>
</gene>
<comment type="function">
    <text evidence="2">Component of the cytochrome c oxidase, the last enzyme in the mitochondrial electron transport chain which drives oxidative phosphorylation. The respiratory chain contains 3 multisubunit complexes succinate dehydrogenase (complex II, CII), ubiquinol-cytochrome c oxidoreductase (cytochrome b-c1 complex, complex III, CIII) and cytochrome c oxidase (complex IV, CIV), that cooperate to transfer electrons derived from NADH and succinate to molecular oxygen, creating an electrochemical gradient over the inner membrane that drives transmembrane transport and the ATP synthase. Cytochrome c oxidase is the component of the respiratory chain that catalyzes the reduction of oxygen to water. Electrons originating from reduced cytochrome c in the intermembrane space (IMS) are transferred via the dinuclear copper A center (CU(A)) of subunit 2 and heme A of subunit 1 to the active site in subunit 1, a binuclear center (BNC) formed by heme A3 and copper B (CU(B)). The BNC reduces molecular oxygen to 2 water molecules using 4 electrons from cytochrome c in the IMS and 4 protons from the mitochondrial matrix.</text>
</comment>
<comment type="catalytic activity">
    <reaction evidence="2">
        <text>4 Fe(II)-[cytochrome c] + O2 + 8 H(+)(in) = 4 Fe(III)-[cytochrome c] + 2 H2O + 4 H(+)(out)</text>
        <dbReference type="Rhea" id="RHEA:11436"/>
        <dbReference type="Rhea" id="RHEA-COMP:10350"/>
        <dbReference type="Rhea" id="RHEA-COMP:14399"/>
        <dbReference type="ChEBI" id="CHEBI:15377"/>
        <dbReference type="ChEBI" id="CHEBI:15378"/>
        <dbReference type="ChEBI" id="CHEBI:15379"/>
        <dbReference type="ChEBI" id="CHEBI:29033"/>
        <dbReference type="ChEBI" id="CHEBI:29034"/>
        <dbReference type="EC" id="7.1.1.9"/>
    </reaction>
    <physiologicalReaction direction="left-to-right" evidence="2">
        <dbReference type="Rhea" id="RHEA:11437"/>
    </physiologicalReaction>
</comment>
<comment type="cofactor">
    <cofactor evidence="2">
        <name>heme</name>
        <dbReference type="ChEBI" id="CHEBI:30413"/>
    </cofactor>
    <text evidence="2">Binds 2 heme A groups non-covalently per subunit.</text>
</comment>
<comment type="cofactor">
    <cofactor evidence="2">
        <name>Cu cation</name>
        <dbReference type="ChEBI" id="CHEBI:23378"/>
    </cofactor>
    <text evidence="2">Binds a copper B center.</text>
</comment>
<comment type="pathway">
    <text evidence="2">Energy metabolism; oxidative phosphorylation.</text>
</comment>
<comment type="subunit">
    <text evidence="2">Component of the cytochrome c oxidase (complex IV, CIV), a multisubunit enzyme composed of a catalytic core of 3 subunits and several supernumerary subunits. The complex exists as a monomer or a dimer and forms supercomplexes (SCs) in the inner mitochondrial membrane with ubiquinol-cytochrome c oxidoreductase (cytochrome b-c1 complex, complex III, CIII).</text>
</comment>
<comment type="subcellular location">
    <subcellularLocation>
        <location evidence="2">Mitochondrion inner membrane</location>
        <topology evidence="2">Multi-pass membrane protein</topology>
    </subcellularLocation>
</comment>
<comment type="similarity">
    <text evidence="4">Belongs to the heme-copper respiratory oxidase family.</text>
</comment>
<keyword id="KW-0106">Calcium</keyword>
<keyword id="KW-0186">Copper</keyword>
<keyword id="KW-0249">Electron transport</keyword>
<keyword id="KW-0349">Heme</keyword>
<keyword id="KW-0408">Iron</keyword>
<keyword id="KW-0460">Magnesium</keyword>
<keyword id="KW-0472">Membrane</keyword>
<keyword id="KW-0479">Metal-binding</keyword>
<keyword id="KW-0496">Mitochondrion</keyword>
<keyword id="KW-0999">Mitochondrion inner membrane</keyword>
<keyword id="KW-0679">Respiratory chain</keyword>
<keyword id="KW-1278">Translocase</keyword>
<keyword id="KW-0812">Transmembrane</keyword>
<keyword id="KW-1133">Transmembrane helix</keyword>
<keyword id="KW-0813">Transport</keyword>
<accession>P67794</accession>
<accession>P50670</accession>
<proteinExistence type="inferred from homology"/>
<reference key="1">
    <citation type="submission" date="2006-05" db="EMBL/GenBank/DDBJ databases">
        <authorList>
            <person name="Roe A."/>
            <person name="Sperling F.A.H."/>
        </authorList>
    </citation>
    <scope>NUCLEOTIDE SEQUENCE [GENOMIC DNA]</scope>
</reference>
<reference key="2">
    <citation type="journal article" date="1994" name="Mol. Biol. Evol.">
        <title>Mitochondrial DNA sequence variation in the spruce budworm species complex (Choristoneura: Lepidoptera).</title>
        <authorList>
            <person name="Sperling F.A.H."/>
            <person name="Hickey D.A."/>
        </authorList>
    </citation>
    <scope>NUCLEOTIDE SEQUENCE [GENOMIC DNA] OF 240-513</scope>
    <source>
        <strain>Isolate 15</strain>
    </source>
</reference>
<organism>
    <name type="scientific">Choristoneura pinus</name>
    <name type="common">Jack pine budworm</name>
    <name type="synonym">Archips pinus</name>
    <dbReference type="NCBI Taxonomy" id="27542"/>
    <lineage>
        <taxon>Eukaryota</taxon>
        <taxon>Metazoa</taxon>
        <taxon>Ecdysozoa</taxon>
        <taxon>Arthropoda</taxon>
        <taxon>Hexapoda</taxon>
        <taxon>Insecta</taxon>
        <taxon>Pterygota</taxon>
        <taxon>Neoptera</taxon>
        <taxon>Endopterygota</taxon>
        <taxon>Lepidoptera</taxon>
        <taxon>Glossata</taxon>
        <taxon>Ditrysia</taxon>
        <taxon>Tortricoidea</taxon>
        <taxon>Tortricidae</taxon>
        <taxon>Tortricinae</taxon>
        <taxon>Choristoneura</taxon>
    </lineage>
</organism>